<proteinExistence type="inferred from homology"/>
<sequence>MATDGASCEPDFSRAPEDAAGAPAEAAKKEFDVDTLSKSELRMLLSVMEGELEARDLVIEALRARRKEVFIQERYGRFNLNDPFLALQRDYEAGASDKEKKPVCTNPLSILEAVMAHCRKMQERMSTQLAAAESRQKKLEMEKLQLQALEQEHKKLAARLEEERGKNKHVVLMLVKECKQLSGKVLEEAQKLEEVMAKLEEEKKKTSALEEELATEKRRSAEMEAQMEKQLSEFDTEREQLRAKLHREEAHTTDLKEEIDKMKKMIEQLKRGNDSKPSLSLPRKTKDRRLVSISVATEGPMTRSVACQTDLVTETAEPLKKLPLTVPVKPAAGSPLVSASAKGNACASAASVRPGIERQVSHGDLIGSSLPTVPPPSTDRIEENGPSTGSTPDLTSSPTALPSTVSPASGHTPTPPPHSLHSPCANAPLHPGLNPRIQAARFRFQGSNANDPDQNGNTTQSPPSRDVSPTSRDTLVAKQLARNTVTQALSRFTSPPAGAPPRPGAPPTGDVGTYPPVGRTSLKTPGGARVDRGNPPPIPPKKPGLSQTPSPPHPQLKVIMDSSRASSTGIKADNKTVASSPSSLPQGNRVINEENLSKSSSPQLPPKPSIDLTVAPAGCAVSALATSQVGAWPAETPGLNQPACSESSLVIPTTTAFRSSINPVSASSRRAGASDSLLVTASGWSPSLTPLLMSGGPAPLAGRPTLLQQAAAQGNVTLLSMLLNEEGLDINYSCEDGHSALYSAAKNGHTDCVRLLLNAEAQVNAADKNGFTPLCAAAAQGHFKCVELLIAYDANINHAADGGQTPLYLACKNGNKECIKLLLEAGTDRSVKTRDGWTPIHAAVDTGNVDSLKLLMYHGAPAHGNKLQEEPGLAIFDLDQEEHHEGTSKPVVPADLINHADSEGWTAAHIAASKGFKNCLEVLCRHGGLEPERRDKCNRTAHDVATDDCKHLLENLNALKIPLRISVGEIEPGNYGADDFECENTICALNIRKQTSWDDFSKAVSQALTNHFQAISSDGWWSLEDMTFNSTTDSSIGLSASSVRSITLGSVPWSAGQSFTQSPWDFMRTNKAEQVTVLLSGPQEGCLSSVTYASMIPLQMLQNYLRLVEQYHNVIFHGPEGSLQDYIAHQLALCLKHRQMAAGFPCEIVRAEVDADFSKEQLVDLFISSACLIPVKQSPANKKIIIILENLEKSSLSELLGDFLGPLENHSTESPCTFQKGNGMSECYYFHENCFLMGTIAKACLQGSDLLVQQHFRWVQLRWDSEPMQGLLQRFLRRKVVNKFRGQVPSPCDPVCKTVDWALAVWRQLNSCLARLGTPEALLGPKYFLSCPVIPGHAQATVKWMSKLWNAVIAPRVQEAILSRASVKRQPGLGQTTKNPSQGQQAVVRAALSILLNKAVLHGCPLQRAELDQHTADFKGGSFPLSIVSSYSSCSKKRESGAWRKVSTSPRKKSGRFSSPTWNKPDLSEEGIKSNTILQLNCNRNASLSNQKSLENDLSLTLNLDQRLSLGSDDEADLVKELQSMCSSKSESDISKIADSRDDLRRFDSSGNNPVFSATVNNPRMPVSQKEVSPLSSHQMTERSNSKSKTESGVSRVKSFLPVPRSKVTQCSQNTKRSSSSSNTRQIEINNNSRDLEPTQK</sequence>
<reference key="1">
    <citation type="submission" date="2006-09" db="EMBL/GenBank/DDBJ databases">
        <title>NISC comparative sequencing initiative.</title>
        <authorList>
            <person name="Antonellis A."/>
            <person name="Ayele K."/>
            <person name="Benjamin B."/>
            <person name="Blakesley R.W."/>
            <person name="Boakye A."/>
            <person name="Bouffard G.G."/>
            <person name="Brinkley C."/>
            <person name="Brooks S."/>
            <person name="Chu G."/>
            <person name="Coleman H."/>
            <person name="Engle J."/>
            <person name="Gestole M."/>
            <person name="Greene A."/>
            <person name="Guan X."/>
            <person name="Gupta J."/>
            <person name="Haghighi P."/>
            <person name="Han J."/>
            <person name="Hansen N."/>
            <person name="Ho S.-L."/>
            <person name="Hu P."/>
            <person name="Hunter G."/>
            <person name="Hurle B."/>
            <person name="Idol J.R."/>
            <person name="Kwong P."/>
            <person name="Laric P."/>
            <person name="Larson S."/>
            <person name="Lee-Lin S.-Q."/>
            <person name="Legaspi R."/>
            <person name="Madden M."/>
            <person name="Maduro Q.L."/>
            <person name="Maduro V.B."/>
            <person name="Margulies E.H."/>
            <person name="Masiello C."/>
            <person name="Maskeri B."/>
            <person name="McDowell J."/>
            <person name="Mojidi H.A."/>
            <person name="Mullikin J.C."/>
            <person name="Oestreicher J.S."/>
            <person name="Park M."/>
            <person name="Portnoy M.E."/>
            <person name="Prasad A."/>
            <person name="Puri O."/>
            <person name="Reddix-Dugue N."/>
            <person name="Schandler K."/>
            <person name="Schueler M.G."/>
            <person name="Sison C."/>
            <person name="Stantripop S."/>
            <person name="Stephen E."/>
            <person name="Taye A."/>
            <person name="Thomas J.W."/>
            <person name="Thomas P.J."/>
            <person name="Tsipouri V."/>
            <person name="Ung L."/>
            <person name="Vogt J.L."/>
            <person name="Wetherby K.D."/>
            <person name="Young A."/>
            <person name="Green E.D."/>
        </authorList>
    </citation>
    <scope>NUCLEOTIDE SEQUENCE [LARGE SCALE GENOMIC DNA]</scope>
</reference>
<dbReference type="EMBL" id="DP000179">
    <property type="protein sequence ID" value="ABI75299.1"/>
    <property type="molecule type" value="Genomic_DNA"/>
</dbReference>
<dbReference type="RefSeq" id="NP_001182240.1">
    <property type="nucleotide sequence ID" value="NM_001195311.1"/>
</dbReference>
<dbReference type="SMR" id="Q09YI1"/>
<dbReference type="STRING" id="9940.ENSOARP00000010942"/>
<dbReference type="PaxDb" id="9940-ENSOARP00000010942"/>
<dbReference type="Ensembl" id="ENSOART00180001625">
    <property type="protein sequence ID" value="ENSOARP00180000850"/>
    <property type="gene ID" value="ENSOARG00180001026"/>
</dbReference>
<dbReference type="Ensembl" id="ENSOART00260011742">
    <property type="protein sequence ID" value="ENSOARP00260005682"/>
    <property type="gene ID" value="ENSOARG00260007324"/>
</dbReference>
<dbReference type="GeneID" id="100126575"/>
<dbReference type="KEGG" id="oas:100126575"/>
<dbReference type="CTD" id="83992"/>
<dbReference type="eggNOG" id="ENOG502QWG2">
    <property type="taxonomic scope" value="Eukaryota"/>
</dbReference>
<dbReference type="HOGENOM" id="CLU_004926_0_0_1"/>
<dbReference type="OMA" id="MCPVEAL"/>
<dbReference type="OrthoDB" id="6021133at2759"/>
<dbReference type="Proteomes" id="UP000002356">
    <property type="component" value="Chromosome 4"/>
</dbReference>
<dbReference type="Bgee" id="ENSOARG00000010183">
    <property type="expression patterns" value="Expressed in mitral valve and 51 other cell types or tissues"/>
</dbReference>
<dbReference type="ExpressionAtlas" id="Q09YI1">
    <property type="expression patterns" value="baseline and differential"/>
</dbReference>
<dbReference type="GO" id="GO:0015629">
    <property type="term" value="C:actin cytoskeleton"/>
    <property type="evidence" value="ECO:0007669"/>
    <property type="project" value="TreeGrafter"/>
</dbReference>
<dbReference type="GO" id="GO:0005938">
    <property type="term" value="C:cell cortex"/>
    <property type="evidence" value="ECO:0007669"/>
    <property type="project" value="UniProtKB-SubCell"/>
</dbReference>
<dbReference type="GO" id="GO:0043197">
    <property type="term" value="C:dendritic spine"/>
    <property type="evidence" value="ECO:0000250"/>
    <property type="project" value="UniProtKB"/>
</dbReference>
<dbReference type="GO" id="GO:0090443">
    <property type="term" value="C:FAR/SIN/STRIPAK complex"/>
    <property type="evidence" value="ECO:0000250"/>
    <property type="project" value="UniProtKB"/>
</dbReference>
<dbReference type="GO" id="GO:0051721">
    <property type="term" value="F:protein phosphatase 2A binding"/>
    <property type="evidence" value="ECO:0007669"/>
    <property type="project" value="TreeGrafter"/>
</dbReference>
<dbReference type="Gene3D" id="1.25.40.20">
    <property type="entry name" value="Ankyrin repeat-containing domain"/>
    <property type="match status" value="1"/>
</dbReference>
<dbReference type="InterPro" id="IPR002110">
    <property type="entry name" value="Ankyrin_rpt"/>
</dbReference>
<dbReference type="InterPro" id="IPR036770">
    <property type="entry name" value="Ankyrin_rpt-contain_sf"/>
</dbReference>
<dbReference type="InterPro" id="IPR050719">
    <property type="entry name" value="Cortactin-Actin_Reg"/>
</dbReference>
<dbReference type="InterPro" id="IPR019131">
    <property type="entry name" value="Cortactin-binding_p2_N"/>
</dbReference>
<dbReference type="PANTHER" id="PTHR23166:SF9">
    <property type="entry name" value="CTTNBP2 N-TERMINAL-LIKE PROTEIN"/>
    <property type="match status" value="1"/>
</dbReference>
<dbReference type="PANTHER" id="PTHR23166">
    <property type="entry name" value="FILAMIN/GPBP-INTERACTING PROTEIN"/>
    <property type="match status" value="1"/>
</dbReference>
<dbReference type="Pfam" id="PF25408">
    <property type="entry name" value="AAA_lid_NAV1"/>
    <property type="match status" value="1"/>
</dbReference>
<dbReference type="Pfam" id="PF00023">
    <property type="entry name" value="Ank"/>
    <property type="match status" value="2"/>
</dbReference>
<dbReference type="Pfam" id="PF12796">
    <property type="entry name" value="Ank_2"/>
    <property type="match status" value="1"/>
</dbReference>
<dbReference type="Pfam" id="PF09727">
    <property type="entry name" value="CortBP2"/>
    <property type="match status" value="1"/>
</dbReference>
<dbReference type="SMART" id="SM00248">
    <property type="entry name" value="ANK"/>
    <property type="match status" value="6"/>
</dbReference>
<dbReference type="SUPFAM" id="SSF48403">
    <property type="entry name" value="Ankyrin repeat"/>
    <property type="match status" value="1"/>
</dbReference>
<dbReference type="PROSITE" id="PS50297">
    <property type="entry name" value="ANK_REP_REGION"/>
    <property type="match status" value="1"/>
</dbReference>
<dbReference type="PROSITE" id="PS50088">
    <property type="entry name" value="ANK_REPEAT"/>
    <property type="match status" value="4"/>
</dbReference>
<feature type="chain" id="PRO_0000260414" description="Cortactin-binding protein 2">
    <location>
        <begin position="1"/>
        <end position="1641"/>
    </location>
</feature>
<feature type="repeat" description="ANK 1">
    <location>
        <begin position="702"/>
        <end position="732"/>
    </location>
</feature>
<feature type="repeat" description="ANK 2">
    <location>
        <begin position="736"/>
        <end position="765"/>
    </location>
</feature>
<feature type="repeat" description="ANK 3">
    <location>
        <begin position="769"/>
        <end position="798"/>
    </location>
</feature>
<feature type="repeat" description="ANK 4">
    <location>
        <begin position="802"/>
        <end position="831"/>
    </location>
</feature>
<feature type="repeat" description="ANK 5">
    <location>
        <begin position="835"/>
        <end position="864"/>
    </location>
</feature>
<feature type="repeat" description="ANK 6">
    <location>
        <begin position="903"/>
        <end position="933"/>
    </location>
</feature>
<feature type="region of interest" description="Disordered" evidence="5">
    <location>
        <begin position="1"/>
        <end position="27"/>
    </location>
</feature>
<feature type="region of interest" description="Disordered" evidence="5">
    <location>
        <begin position="361"/>
        <end position="433"/>
    </location>
</feature>
<feature type="region of interest" description="Disordered" evidence="5">
    <location>
        <begin position="446"/>
        <end position="472"/>
    </location>
</feature>
<feature type="region of interest" description="Disordered" evidence="5">
    <location>
        <begin position="488"/>
        <end position="588"/>
    </location>
</feature>
<feature type="region of interest" description="Disordered" evidence="5">
    <location>
        <begin position="1442"/>
        <end position="1468"/>
    </location>
</feature>
<feature type="region of interest" description="Disordered" evidence="5">
    <location>
        <begin position="1544"/>
        <end position="1641"/>
    </location>
</feature>
<feature type="coiled-coil region" evidence="4">
    <location>
        <begin position="119"/>
        <end position="276"/>
    </location>
</feature>
<feature type="compositionally biased region" description="Polar residues" evidence="5">
    <location>
        <begin position="385"/>
        <end position="405"/>
    </location>
</feature>
<feature type="compositionally biased region" description="Pro residues" evidence="5">
    <location>
        <begin position="497"/>
        <end position="506"/>
    </location>
</feature>
<feature type="compositionally biased region" description="Polar residues" evidence="5">
    <location>
        <begin position="576"/>
        <end position="586"/>
    </location>
</feature>
<feature type="compositionally biased region" description="Polar residues" evidence="5">
    <location>
        <begin position="1551"/>
        <end position="1562"/>
    </location>
</feature>
<feature type="compositionally biased region" description="Polar residues" evidence="5">
    <location>
        <begin position="1570"/>
        <end position="1579"/>
    </location>
</feature>
<feature type="compositionally biased region" description="Basic and acidic residues" evidence="5">
    <location>
        <begin position="1580"/>
        <end position="1590"/>
    </location>
</feature>
<feature type="compositionally biased region" description="Low complexity" evidence="5">
    <location>
        <begin position="1612"/>
        <end position="1626"/>
    </location>
</feature>
<feature type="modified residue" description="Asymmetric dimethylarginine" evidence="1">
    <location>
        <position position="491"/>
    </location>
</feature>
<feature type="modified residue" description="Phosphoserine" evidence="3">
    <location>
        <position position="1512"/>
    </location>
</feature>
<accession>Q09YI1</accession>
<protein>
    <recommendedName>
        <fullName>Cortactin-binding protein 2</fullName>
        <shortName>CortBP2</shortName>
    </recommendedName>
</protein>
<organism>
    <name type="scientific">Ovis aries</name>
    <name type="common">Sheep</name>
    <dbReference type="NCBI Taxonomy" id="9940"/>
    <lineage>
        <taxon>Eukaryota</taxon>
        <taxon>Metazoa</taxon>
        <taxon>Chordata</taxon>
        <taxon>Craniata</taxon>
        <taxon>Vertebrata</taxon>
        <taxon>Euteleostomi</taxon>
        <taxon>Mammalia</taxon>
        <taxon>Eutheria</taxon>
        <taxon>Laurasiatheria</taxon>
        <taxon>Artiodactyla</taxon>
        <taxon>Ruminantia</taxon>
        <taxon>Pecora</taxon>
        <taxon>Bovidae</taxon>
        <taxon>Caprinae</taxon>
        <taxon>Ovis</taxon>
    </lineage>
</organism>
<evidence type="ECO:0000250" key="1">
    <source>
        <dbReference type="UniProtKB" id="B9EJA2"/>
    </source>
</evidence>
<evidence type="ECO:0000250" key="2">
    <source>
        <dbReference type="UniProtKB" id="Q2IBD4"/>
    </source>
</evidence>
<evidence type="ECO:0000250" key="3">
    <source>
        <dbReference type="UniProtKB" id="Q8WZ74"/>
    </source>
</evidence>
<evidence type="ECO:0000255" key="4"/>
<evidence type="ECO:0000256" key="5">
    <source>
        <dbReference type="SAM" id="MobiDB-lite"/>
    </source>
</evidence>
<name>CTTB2_SHEEP</name>
<gene>
    <name type="primary">CTTNBP2</name>
    <name type="synonym">CORTBP2</name>
</gene>
<keyword id="KW-0040">ANK repeat</keyword>
<keyword id="KW-0966">Cell projection</keyword>
<keyword id="KW-0175">Coiled coil</keyword>
<keyword id="KW-0963">Cytoplasm</keyword>
<keyword id="KW-0488">Methylation</keyword>
<keyword id="KW-0597">Phosphoprotein</keyword>
<keyword id="KW-1185">Reference proteome</keyword>
<keyword id="KW-0677">Repeat</keyword>
<keyword id="KW-0770">Synapse</keyword>
<comment type="function">
    <text evidence="2">Regulates the dendritic spine distribution of CTTN/cortactin in hippocampal neurons, and thus controls dendritic spinogenesis and dendritic spine maintenance. Associates with the striatin-interacting phosphatase and kinase (STRIPAK) core complex to regulate dendritic spine distribution of the STRIPAK complex in hippocampal neurons.</text>
</comment>
<comment type="subunit">
    <text evidence="2">Interacts with CTTN/cortactin SH3 domain. Interacts with STRN, STRN4/zinedin and MOB4/phocein; this interactions mediate the association with the STRIPAK core complex and may regulate dendritic spine distribution of the STRIPAK complex in hippocampal neurons. Activation of glutamate receptors weakens the interaction with STRN and STRN4.</text>
</comment>
<comment type="subcellular location">
    <subcellularLocation>
        <location evidence="1">Cytoplasm</location>
        <location evidence="1">Cell cortex</location>
    </subcellularLocation>
    <subcellularLocation>
        <location evidence="2">Cell projection</location>
        <location evidence="2">Dendritic spine</location>
    </subcellularLocation>
    <text evidence="2">Remains associated with dendritic spines even after glutamate stimulation.</text>
</comment>